<feature type="signal peptide" evidence="1">
    <location>
        <begin position="1"/>
        <end position="22"/>
    </location>
</feature>
<feature type="peptide" id="PRO_0000450980" description="Conotoxin Cal6.36">
    <location>
        <begin position="23"/>
        <end position="52"/>
    </location>
</feature>
<feature type="disulfide bond" evidence="3">
    <location>
        <begin position="24"/>
        <end position="39"/>
    </location>
</feature>
<feature type="disulfide bond" evidence="3">
    <location>
        <begin position="31"/>
        <end position="43"/>
    </location>
</feature>
<feature type="disulfide bond" evidence="3">
    <location>
        <begin position="38"/>
        <end position="47"/>
    </location>
</feature>
<dbReference type="SMR" id="P0DTZ8"/>
<dbReference type="GO" id="GO:0005576">
    <property type="term" value="C:extracellular region"/>
    <property type="evidence" value="ECO:0007669"/>
    <property type="project" value="UniProtKB-SubCell"/>
</dbReference>
<dbReference type="GO" id="GO:0090729">
    <property type="term" value="F:toxin activity"/>
    <property type="evidence" value="ECO:0007669"/>
    <property type="project" value="UniProtKB-KW"/>
</dbReference>
<organism>
    <name type="scientific">Californiconus californicus</name>
    <name type="common">California cone</name>
    <name type="synonym">Conus californicus</name>
    <dbReference type="NCBI Taxonomy" id="1736779"/>
    <lineage>
        <taxon>Eukaryota</taxon>
        <taxon>Metazoa</taxon>
        <taxon>Spiralia</taxon>
        <taxon>Lophotrochozoa</taxon>
        <taxon>Mollusca</taxon>
        <taxon>Gastropoda</taxon>
        <taxon>Caenogastropoda</taxon>
        <taxon>Neogastropoda</taxon>
        <taxon>Conoidea</taxon>
        <taxon>Conidae</taxon>
        <taxon>Californiconus</taxon>
    </lineage>
</organism>
<evidence type="ECO:0000255" key="1"/>
<evidence type="ECO:0000303" key="2">
    <source>
    </source>
</evidence>
<evidence type="ECO:0000305" key="3"/>
<evidence type="ECO:0000305" key="4">
    <source>
    </source>
</evidence>
<sequence length="52" mass="5718">MKVTCVLTLAVLILTVGQMVTADCRSPGSWCFYKHSNCCSGNCFLWCVQNGK</sequence>
<reference key="1">
    <citation type="journal article" date="2019" name="Toxins">
        <title>The diversified O-superfamily in Californiconus californicus presents a conotoxin with antimycobacterial activity.</title>
        <authorList>
            <person name="Bernaldez-Sarabia J."/>
            <person name="Figueroa-Montiel A."/>
            <person name="Duenas S."/>
            <person name="Cervantes-Luevano K."/>
            <person name="Beltran J.A."/>
            <person name="Ortiz E."/>
            <person name="Jimenez S."/>
            <person name="Possani L.D."/>
            <person name="Paniagua-Solis J.F."/>
            <person name="Gonzalez-Canudas J."/>
            <person name="Licea-Navarro A."/>
        </authorList>
    </citation>
    <scope>NUCLEOTIDE SEQUENCE [MRNA]</scope>
    <source>
        <tissue>Venom duct</tissue>
    </source>
</reference>
<keyword id="KW-1015">Disulfide bond</keyword>
<keyword id="KW-0960">Knottin</keyword>
<keyword id="KW-0528">Neurotoxin</keyword>
<keyword id="KW-0964">Secreted</keyword>
<keyword id="KW-0732">Signal</keyword>
<keyword id="KW-0800">Toxin</keyword>
<proteinExistence type="inferred from homology"/>
<protein>
    <recommendedName>
        <fullName evidence="3">Conotoxin Cal6.36</fullName>
    </recommendedName>
    <alternativeName>
        <fullName evidence="2">O1_cal6.36</fullName>
    </alternativeName>
</protein>
<accession>P0DTZ8</accession>
<name>C636_CONCL</name>
<comment type="function">
    <text evidence="3">Probable neurotoxin.</text>
</comment>
<comment type="subcellular location">
    <subcellularLocation>
        <location evidence="4">Secreted</location>
    </subcellularLocation>
</comment>
<comment type="tissue specificity">
    <text evidence="4">Expressed by the venom duct.</text>
</comment>
<comment type="domain">
    <text evidence="3">The cysteine framework is VI/VII (C-C-CC-C-C).</text>
</comment>
<comment type="domain">
    <text evidence="3">The presence of a 'disulfide through disulfide knot' structurally defines this protein as a knottin.</text>
</comment>